<reference key="1">
    <citation type="journal article" date="2011" name="Cell">
        <title>Insight into structure and assembly of the nuclear pore complex by utilizing the genome of a eukaryotic thermophile.</title>
        <authorList>
            <person name="Amlacher S."/>
            <person name="Sarges P."/>
            <person name="Flemming D."/>
            <person name="van Noort V."/>
            <person name="Kunze R."/>
            <person name="Devos D.P."/>
            <person name="Arumugam M."/>
            <person name="Bork P."/>
            <person name="Hurt E."/>
        </authorList>
    </citation>
    <scope>NUCLEOTIDE SEQUENCE [LARGE SCALE GENOMIC DNA]</scope>
    <source>
        <strain>DSM 1495 / CBS 144.50 / IMI 039719</strain>
    </source>
</reference>
<protein>
    <recommendedName>
        <fullName>Pre-rRNA-processing protein IPI1</fullName>
    </recommendedName>
</protein>
<sequence length="338" mass="37390">MGSSSKKKKEKQKDFQKPKLKVGKPKQKPSNFTDTSFKTKSIVVNQQTLTTEGLDSAELFKQNLTLAVNAKSDNQRRDALAYVTNQLSANPANNPVGTVGVLTKVLPLITDGASSVRVQLLKLFRTLPPQEVRPHAEKILLYIRGGMTHLSNDVRTDTLNVLDWLLEVAGDEVVSCPGGWLKTLNSFSSMLGWNPNVSSAMTTKGWTSAPKATLGMKKGPESQAKQIQVLAKFLQTGFRPEEPLPYKPRAYWDNIYRLPTTPNPFAYLNLFGLPRDEDSEMYPDRMSRLRVFDMKWRAAITSGMETAKKEGGTVGRAAAILDKALKASLESDGSMQVN</sequence>
<dbReference type="EMBL" id="GL988039">
    <property type="status" value="NOT_ANNOTATED_CDS"/>
    <property type="molecule type" value="Genomic_DNA"/>
</dbReference>
<dbReference type="PDB" id="8PV4">
    <property type="method" value="EM"/>
    <property type="resolution" value="2.90 A"/>
    <property type="chains" value="CS=1-338"/>
</dbReference>
<dbReference type="PDB" id="8PV6">
    <property type="method" value="EM"/>
    <property type="resolution" value="2.94 A"/>
    <property type="chains" value="CS=1-338"/>
</dbReference>
<dbReference type="PDB" id="8PV8">
    <property type="method" value="EM"/>
    <property type="resolution" value="2.91 A"/>
    <property type="chains" value="CS=1-338"/>
</dbReference>
<dbReference type="PDBsum" id="8PV4"/>
<dbReference type="PDBsum" id="8PV6"/>
<dbReference type="PDBsum" id="8PV8"/>
<dbReference type="EMDB" id="EMD-17953"/>
<dbReference type="EMDB" id="EMD-17955"/>
<dbReference type="EMDB" id="EMD-17957"/>
<dbReference type="SMR" id="P0CT45"/>
<dbReference type="STRING" id="759272.P0CT45"/>
<dbReference type="Proteomes" id="UP000008066">
    <property type="component" value="Unassembled WGS sequence"/>
</dbReference>
<dbReference type="GO" id="GO:0005634">
    <property type="term" value="C:nucleus"/>
    <property type="evidence" value="ECO:0007669"/>
    <property type="project" value="UniProtKB-SubCell"/>
</dbReference>
<dbReference type="GO" id="GO:0120330">
    <property type="term" value="C:rixosome complex"/>
    <property type="evidence" value="ECO:0007669"/>
    <property type="project" value="TreeGrafter"/>
</dbReference>
<dbReference type="GO" id="GO:0006364">
    <property type="term" value="P:rRNA processing"/>
    <property type="evidence" value="ECO:0007669"/>
    <property type="project" value="UniProtKB-KW"/>
</dbReference>
<dbReference type="InterPro" id="IPR016024">
    <property type="entry name" value="ARM-type_fold"/>
</dbReference>
<dbReference type="InterPro" id="IPR024679">
    <property type="entry name" value="Ipi1_N"/>
</dbReference>
<dbReference type="PANTHER" id="PTHR16056">
    <property type="entry name" value="REGULATOR OF MICROTUBULE DYNAMICS PROTEIN"/>
    <property type="match status" value="1"/>
</dbReference>
<dbReference type="PANTHER" id="PTHR16056:SF2">
    <property type="entry name" value="TESTIS-EXPRESSED PROTEIN 10"/>
    <property type="match status" value="1"/>
</dbReference>
<dbReference type="Pfam" id="PF12333">
    <property type="entry name" value="Ipi1_N"/>
    <property type="match status" value="1"/>
</dbReference>
<dbReference type="SUPFAM" id="SSF48371">
    <property type="entry name" value="ARM repeat"/>
    <property type="match status" value="1"/>
</dbReference>
<proteinExistence type="evidence at protein level"/>
<keyword id="KW-0002">3D-structure</keyword>
<keyword id="KW-0539">Nucleus</keyword>
<keyword id="KW-1185">Reference proteome</keyword>
<keyword id="KW-0690">Ribosome biogenesis</keyword>
<keyword id="KW-0698">rRNA processing</keyword>
<feature type="chain" id="PRO_0000425283" description="Pre-rRNA-processing protein IPI1">
    <location>
        <begin position="1"/>
        <end position="338"/>
    </location>
</feature>
<feature type="region of interest" description="Disordered" evidence="2">
    <location>
        <begin position="1"/>
        <end position="34"/>
    </location>
</feature>
<feature type="compositionally biased region" description="Basic residues" evidence="2">
    <location>
        <begin position="1"/>
        <end position="10"/>
    </location>
</feature>
<feature type="compositionally biased region" description="Basic residues" evidence="2">
    <location>
        <begin position="18"/>
        <end position="27"/>
    </location>
</feature>
<evidence type="ECO:0000250" key="1">
    <source>
        <dbReference type="UniProtKB" id="P38803"/>
    </source>
</evidence>
<evidence type="ECO:0000256" key="2">
    <source>
        <dbReference type="SAM" id="MobiDB-lite"/>
    </source>
</evidence>
<evidence type="ECO:0000305" key="3"/>
<gene>
    <name type="primary">IPI1</name>
    <name type="ORF">CTHT_0115680</name>
</gene>
<accession>P0CT45</accession>
<comment type="function">
    <text evidence="1">Component of the RIX1 complex required for processing of ITS2 sequences from 35S pre-rRNA.</text>
</comment>
<comment type="subunit">
    <text evidence="1">Component of the RIX1 complex, composed of IPI1, RIX1/IPI2 and IPI3 in a 1:2:2 stoichiometry. The complex interacts (via RIX1) with MDN1 (via its hexameric AAA ATPase ring) and the pre-60S ribosome particles.</text>
</comment>
<comment type="subcellular location">
    <subcellularLocation>
        <location evidence="1">Nucleus</location>
    </subcellularLocation>
</comment>
<comment type="similarity">
    <text evidence="3">Belongs to the IPI1/TEX10 family.</text>
</comment>
<name>IPI1_CHATD</name>
<organism>
    <name type="scientific">Chaetomium thermophilum (strain DSM 1495 / CBS 144.50 / IMI 039719)</name>
    <name type="common">Thermochaetoides thermophila</name>
    <dbReference type="NCBI Taxonomy" id="759272"/>
    <lineage>
        <taxon>Eukaryota</taxon>
        <taxon>Fungi</taxon>
        <taxon>Dikarya</taxon>
        <taxon>Ascomycota</taxon>
        <taxon>Pezizomycotina</taxon>
        <taxon>Sordariomycetes</taxon>
        <taxon>Sordariomycetidae</taxon>
        <taxon>Sordariales</taxon>
        <taxon>Chaetomiaceae</taxon>
        <taxon>Thermochaetoides</taxon>
    </lineage>
</organism>